<keyword id="KW-0012">Acyltransferase</keyword>
<keyword id="KW-0133">Cell shape</keyword>
<keyword id="KW-0961">Cell wall biogenesis/degradation</keyword>
<keyword id="KW-0963">Cytoplasm</keyword>
<keyword id="KW-0460">Magnesium</keyword>
<keyword id="KW-0479">Metal-binding</keyword>
<keyword id="KW-0511">Multifunctional enzyme</keyword>
<keyword id="KW-0548">Nucleotidyltransferase</keyword>
<keyword id="KW-0573">Peptidoglycan synthesis</keyword>
<keyword id="KW-0677">Repeat</keyword>
<keyword id="KW-0808">Transferase</keyword>
<sequence length="456" mass="48840">MSNSSMSVVILAAGKGTRMYSDLPKVLHPLAGKPMVQHVIDAAMKLGAQHVHLVYGHGGELLKKTLADPSLNWVLQAEQLGTGHAMQQAAPHFADDEDILMLYGDVPLISVDTLQRLLAAKPEGGIGLLTVKLDNPSGYGRIVRENGDVVGIVEHKDASDAQREINEINTGILVANGRDLKRWLSLLDNNNAQGEFYITDIIALAHADGKKIATVHPTRLSEVEGVNNRLQLSALERVFQTEQAEKLLLAGVMLLDPSRFDLRGELTHGRDITIDTNVIIEGHVILGDRVRIGTGCVLKNCVIGDDSEISPYTVLEDARLDANCTVGPFARLRPGAELAEGAHVGNFVEIKKARLGKGSKAGHLSYLGDAEIGAGVNIGAGTITCNYDGANKFKTIIGDDVFVGSDTQLVAPVTVANGATIGAGTTVTRDVAENELVISRVKQVHIQGWKRPVKKK</sequence>
<feature type="chain" id="PRO_1000069739" description="Bifunctional protein GlmU">
    <location>
        <begin position="1"/>
        <end position="456"/>
    </location>
</feature>
<feature type="region of interest" description="Pyrophosphorylase" evidence="1">
    <location>
        <begin position="1"/>
        <end position="229"/>
    </location>
</feature>
<feature type="region of interest" description="Linker" evidence="1">
    <location>
        <begin position="230"/>
        <end position="250"/>
    </location>
</feature>
<feature type="region of interest" description="N-acetyltransferase" evidence="1">
    <location>
        <begin position="251"/>
        <end position="456"/>
    </location>
</feature>
<feature type="active site" description="Proton acceptor" evidence="1">
    <location>
        <position position="363"/>
    </location>
</feature>
<feature type="binding site" evidence="1">
    <location>
        <begin position="11"/>
        <end position="14"/>
    </location>
    <ligand>
        <name>UDP-N-acetyl-alpha-D-glucosamine</name>
        <dbReference type="ChEBI" id="CHEBI:57705"/>
    </ligand>
</feature>
<feature type="binding site" evidence="1">
    <location>
        <position position="25"/>
    </location>
    <ligand>
        <name>UDP-N-acetyl-alpha-D-glucosamine</name>
        <dbReference type="ChEBI" id="CHEBI:57705"/>
    </ligand>
</feature>
<feature type="binding site" evidence="1">
    <location>
        <position position="76"/>
    </location>
    <ligand>
        <name>UDP-N-acetyl-alpha-D-glucosamine</name>
        <dbReference type="ChEBI" id="CHEBI:57705"/>
    </ligand>
</feature>
<feature type="binding site" evidence="1">
    <location>
        <begin position="81"/>
        <end position="82"/>
    </location>
    <ligand>
        <name>UDP-N-acetyl-alpha-D-glucosamine</name>
        <dbReference type="ChEBI" id="CHEBI:57705"/>
    </ligand>
</feature>
<feature type="binding site" evidence="1">
    <location>
        <begin position="103"/>
        <end position="105"/>
    </location>
    <ligand>
        <name>UDP-N-acetyl-alpha-D-glucosamine</name>
        <dbReference type="ChEBI" id="CHEBI:57705"/>
    </ligand>
</feature>
<feature type="binding site" evidence="1">
    <location>
        <position position="105"/>
    </location>
    <ligand>
        <name>Mg(2+)</name>
        <dbReference type="ChEBI" id="CHEBI:18420"/>
    </ligand>
</feature>
<feature type="binding site" evidence="1">
    <location>
        <position position="140"/>
    </location>
    <ligand>
        <name>UDP-N-acetyl-alpha-D-glucosamine</name>
        <dbReference type="ChEBI" id="CHEBI:57705"/>
    </ligand>
</feature>
<feature type="binding site" evidence="1">
    <location>
        <position position="154"/>
    </location>
    <ligand>
        <name>UDP-N-acetyl-alpha-D-glucosamine</name>
        <dbReference type="ChEBI" id="CHEBI:57705"/>
    </ligand>
</feature>
<feature type="binding site" evidence="1">
    <location>
        <position position="169"/>
    </location>
    <ligand>
        <name>UDP-N-acetyl-alpha-D-glucosamine</name>
        <dbReference type="ChEBI" id="CHEBI:57705"/>
    </ligand>
</feature>
<feature type="binding site" evidence="1">
    <location>
        <position position="227"/>
    </location>
    <ligand>
        <name>Mg(2+)</name>
        <dbReference type="ChEBI" id="CHEBI:18420"/>
    </ligand>
</feature>
<feature type="binding site" evidence="1">
    <location>
        <position position="227"/>
    </location>
    <ligand>
        <name>UDP-N-acetyl-alpha-D-glucosamine</name>
        <dbReference type="ChEBI" id="CHEBI:57705"/>
    </ligand>
</feature>
<feature type="binding site" evidence="1">
    <location>
        <position position="333"/>
    </location>
    <ligand>
        <name>UDP-N-acetyl-alpha-D-glucosamine</name>
        <dbReference type="ChEBI" id="CHEBI:57705"/>
    </ligand>
</feature>
<feature type="binding site" evidence="1">
    <location>
        <position position="351"/>
    </location>
    <ligand>
        <name>UDP-N-acetyl-alpha-D-glucosamine</name>
        <dbReference type="ChEBI" id="CHEBI:57705"/>
    </ligand>
</feature>
<feature type="binding site" evidence="1">
    <location>
        <position position="366"/>
    </location>
    <ligand>
        <name>UDP-N-acetyl-alpha-D-glucosamine</name>
        <dbReference type="ChEBI" id="CHEBI:57705"/>
    </ligand>
</feature>
<feature type="binding site" evidence="1">
    <location>
        <position position="377"/>
    </location>
    <ligand>
        <name>UDP-N-acetyl-alpha-D-glucosamine</name>
        <dbReference type="ChEBI" id="CHEBI:57705"/>
    </ligand>
</feature>
<feature type="binding site" evidence="1">
    <location>
        <position position="380"/>
    </location>
    <ligand>
        <name>acetyl-CoA</name>
        <dbReference type="ChEBI" id="CHEBI:57288"/>
    </ligand>
</feature>
<feature type="binding site" evidence="1">
    <location>
        <begin position="386"/>
        <end position="387"/>
    </location>
    <ligand>
        <name>acetyl-CoA</name>
        <dbReference type="ChEBI" id="CHEBI:57288"/>
    </ligand>
</feature>
<feature type="binding site" evidence="1">
    <location>
        <position position="405"/>
    </location>
    <ligand>
        <name>acetyl-CoA</name>
        <dbReference type="ChEBI" id="CHEBI:57288"/>
    </ligand>
</feature>
<feature type="binding site" evidence="1">
    <location>
        <position position="423"/>
    </location>
    <ligand>
        <name>acetyl-CoA</name>
        <dbReference type="ChEBI" id="CHEBI:57288"/>
    </ligand>
</feature>
<feature type="binding site" evidence="1">
    <location>
        <position position="440"/>
    </location>
    <ligand>
        <name>acetyl-CoA</name>
        <dbReference type="ChEBI" id="CHEBI:57288"/>
    </ligand>
</feature>
<name>GLMU_YERP3</name>
<protein>
    <recommendedName>
        <fullName evidence="1">Bifunctional protein GlmU</fullName>
    </recommendedName>
    <domain>
        <recommendedName>
            <fullName evidence="1">UDP-N-acetylglucosamine pyrophosphorylase</fullName>
            <ecNumber evidence="1">2.7.7.23</ecNumber>
        </recommendedName>
        <alternativeName>
            <fullName evidence="1">N-acetylglucosamine-1-phosphate uridyltransferase</fullName>
        </alternativeName>
    </domain>
    <domain>
        <recommendedName>
            <fullName evidence="1">Glucosamine-1-phosphate N-acetyltransferase</fullName>
            <ecNumber evidence="1">2.3.1.157</ecNumber>
        </recommendedName>
    </domain>
</protein>
<gene>
    <name evidence="1" type="primary">glmU</name>
    <name type="ordered locus">YpsIP31758_4174</name>
</gene>
<dbReference type="EC" id="2.7.7.23" evidence="1"/>
<dbReference type="EC" id="2.3.1.157" evidence="1"/>
<dbReference type="EMBL" id="CP000720">
    <property type="protein sequence ID" value="ABS46247.1"/>
    <property type="molecule type" value="Genomic_DNA"/>
</dbReference>
<dbReference type="RefSeq" id="WP_002215550.1">
    <property type="nucleotide sequence ID" value="NC_009708.1"/>
</dbReference>
<dbReference type="SMR" id="A7FPD8"/>
<dbReference type="GeneID" id="57974605"/>
<dbReference type="KEGG" id="ypi:YpsIP31758_4174"/>
<dbReference type="HOGENOM" id="CLU_029499_15_2_6"/>
<dbReference type="UniPathway" id="UPA00113">
    <property type="reaction ID" value="UER00532"/>
</dbReference>
<dbReference type="UniPathway" id="UPA00113">
    <property type="reaction ID" value="UER00533"/>
</dbReference>
<dbReference type="UniPathway" id="UPA00973"/>
<dbReference type="Proteomes" id="UP000002412">
    <property type="component" value="Chromosome"/>
</dbReference>
<dbReference type="GO" id="GO:0005737">
    <property type="term" value="C:cytoplasm"/>
    <property type="evidence" value="ECO:0007669"/>
    <property type="project" value="UniProtKB-SubCell"/>
</dbReference>
<dbReference type="GO" id="GO:0016020">
    <property type="term" value="C:membrane"/>
    <property type="evidence" value="ECO:0007669"/>
    <property type="project" value="GOC"/>
</dbReference>
<dbReference type="GO" id="GO:0019134">
    <property type="term" value="F:glucosamine-1-phosphate N-acetyltransferase activity"/>
    <property type="evidence" value="ECO:0007669"/>
    <property type="project" value="UniProtKB-UniRule"/>
</dbReference>
<dbReference type="GO" id="GO:0000287">
    <property type="term" value="F:magnesium ion binding"/>
    <property type="evidence" value="ECO:0007669"/>
    <property type="project" value="UniProtKB-UniRule"/>
</dbReference>
<dbReference type="GO" id="GO:0003977">
    <property type="term" value="F:UDP-N-acetylglucosamine diphosphorylase activity"/>
    <property type="evidence" value="ECO:0007669"/>
    <property type="project" value="UniProtKB-UniRule"/>
</dbReference>
<dbReference type="GO" id="GO:0000902">
    <property type="term" value="P:cell morphogenesis"/>
    <property type="evidence" value="ECO:0007669"/>
    <property type="project" value="UniProtKB-UniRule"/>
</dbReference>
<dbReference type="GO" id="GO:0071555">
    <property type="term" value="P:cell wall organization"/>
    <property type="evidence" value="ECO:0007669"/>
    <property type="project" value="UniProtKB-KW"/>
</dbReference>
<dbReference type="GO" id="GO:0009245">
    <property type="term" value="P:lipid A biosynthetic process"/>
    <property type="evidence" value="ECO:0007669"/>
    <property type="project" value="UniProtKB-UniRule"/>
</dbReference>
<dbReference type="GO" id="GO:0009252">
    <property type="term" value="P:peptidoglycan biosynthetic process"/>
    <property type="evidence" value="ECO:0007669"/>
    <property type="project" value="UniProtKB-UniRule"/>
</dbReference>
<dbReference type="GO" id="GO:0008360">
    <property type="term" value="P:regulation of cell shape"/>
    <property type="evidence" value="ECO:0007669"/>
    <property type="project" value="UniProtKB-KW"/>
</dbReference>
<dbReference type="GO" id="GO:0006048">
    <property type="term" value="P:UDP-N-acetylglucosamine biosynthetic process"/>
    <property type="evidence" value="ECO:0007669"/>
    <property type="project" value="UniProtKB-UniPathway"/>
</dbReference>
<dbReference type="CDD" id="cd02540">
    <property type="entry name" value="GT2_GlmU_N_bac"/>
    <property type="match status" value="1"/>
</dbReference>
<dbReference type="CDD" id="cd03353">
    <property type="entry name" value="LbH_GlmU_C"/>
    <property type="match status" value="1"/>
</dbReference>
<dbReference type="FunFam" id="2.160.10.10:FF:000011">
    <property type="entry name" value="Bifunctional protein GlmU"/>
    <property type="match status" value="1"/>
</dbReference>
<dbReference type="FunFam" id="3.90.550.10:FF:000006">
    <property type="entry name" value="Bifunctional protein GlmU"/>
    <property type="match status" value="1"/>
</dbReference>
<dbReference type="Gene3D" id="2.160.10.10">
    <property type="entry name" value="Hexapeptide repeat proteins"/>
    <property type="match status" value="1"/>
</dbReference>
<dbReference type="Gene3D" id="3.90.550.10">
    <property type="entry name" value="Spore Coat Polysaccharide Biosynthesis Protein SpsA, Chain A"/>
    <property type="match status" value="1"/>
</dbReference>
<dbReference type="HAMAP" id="MF_01631">
    <property type="entry name" value="GlmU"/>
    <property type="match status" value="1"/>
</dbReference>
<dbReference type="InterPro" id="IPR005882">
    <property type="entry name" value="Bifunctional_GlmU"/>
</dbReference>
<dbReference type="InterPro" id="IPR050065">
    <property type="entry name" value="GlmU-like"/>
</dbReference>
<dbReference type="InterPro" id="IPR038009">
    <property type="entry name" value="GlmU_C_LbH"/>
</dbReference>
<dbReference type="InterPro" id="IPR001451">
    <property type="entry name" value="Hexapep"/>
</dbReference>
<dbReference type="InterPro" id="IPR018357">
    <property type="entry name" value="Hexapep_transf_CS"/>
</dbReference>
<dbReference type="InterPro" id="IPR025877">
    <property type="entry name" value="MobA-like_NTP_Trfase"/>
</dbReference>
<dbReference type="InterPro" id="IPR029044">
    <property type="entry name" value="Nucleotide-diphossugar_trans"/>
</dbReference>
<dbReference type="InterPro" id="IPR011004">
    <property type="entry name" value="Trimer_LpxA-like_sf"/>
</dbReference>
<dbReference type="NCBIfam" id="TIGR01173">
    <property type="entry name" value="glmU"/>
    <property type="match status" value="1"/>
</dbReference>
<dbReference type="NCBIfam" id="NF006986">
    <property type="entry name" value="PRK09451.1"/>
    <property type="match status" value="1"/>
</dbReference>
<dbReference type="PANTHER" id="PTHR43584:SF3">
    <property type="entry name" value="BIFUNCTIONAL PROTEIN GLMU"/>
    <property type="match status" value="1"/>
</dbReference>
<dbReference type="PANTHER" id="PTHR43584">
    <property type="entry name" value="NUCLEOTIDYL TRANSFERASE"/>
    <property type="match status" value="1"/>
</dbReference>
<dbReference type="Pfam" id="PF00132">
    <property type="entry name" value="Hexapep"/>
    <property type="match status" value="1"/>
</dbReference>
<dbReference type="Pfam" id="PF12804">
    <property type="entry name" value="NTP_transf_3"/>
    <property type="match status" value="1"/>
</dbReference>
<dbReference type="SUPFAM" id="SSF53448">
    <property type="entry name" value="Nucleotide-diphospho-sugar transferases"/>
    <property type="match status" value="1"/>
</dbReference>
<dbReference type="SUPFAM" id="SSF51161">
    <property type="entry name" value="Trimeric LpxA-like enzymes"/>
    <property type="match status" value="1"/>
</dbReference>
<dbReference type="PROSITE" id="PS00101">
    <property type="entry name" value="HEXAPEP_TRANSFERASES"/>
    <property type="match status" value="1"/>
</dbReference>
<organism>
    <name type="scientific">Yersinia pseudotuberculosis serotype O:1b (strain IP 31758)</name>
    <dbReference type="NCBI Taxonomy" id="349747"/>
    <lineage>
        <taxon>Bacteria</taxon>
        <taxon>Pseudomonadati</taxon>
        <taxon>Pseudomonadota</taxon>
        <taxon>Gammaproteobacteria</taxon>
        <taxon>Enterobacterales</taxon>
        <taxon>Yersiniaceae</taxon>
        <taxon>Yersinia</taxon>
    </lineage>
</organism>
<proteinExistence type="inferred from homology"/>
<comment type="function">
    <text evidence="1">Catalyzes the last two sequential reactions in the de novo biosynthetic pathway for UDP-N-acetylglucosamine (UDP-GlcNAc). The C-terminal domain catalyzes the transfer of acetyl group from acetyl coenzyme A to glucosamine-1-phosphate (GlcN-1-P) to produce N-acetylglucosamine-1-phosphate (GlcNAc-1-P), which is converted into UDP-GlcNAc by the transfer of uridine 5-monophosphate (from uridine 5-triphosphate), a reaction catalyzed by the N-terminal domain.</text>
</comment>
<comment type="catalytic activity">
    <reaction evidence="1">
        <text>alpha-D-glucosamine 1-phosphate + acetyl-CoA = N-acetyl-alpha-D-glucosamine 1-phosphate + CoA + H(+)</text>
        <dbReference type="Rhea" id="RHEA:13725"/>
        <dbReference type="ChEBI" id="CHEBI:15378"/>
        <dbReference type="ChEBI" id="CHEBI:57287"/>
        <dbReference type="ChEBI" id="CHEBI:57288"/>
        <dbReference type="ChEBI" id="CHEBI:57776"/>
        <dbReference type="ChEBI" id="CHEBI:58516"/>
        <dbReference type="EC" id="2.3.1.157"/>
    </reaction>
</comment>
<comment type="catalytic activity">
    <reaction evidence="1">
        <text>N-acetyl-alpha-D-glucosamine 1-phosphate + UTP + H(+) = UDP-N-acetyl-alpha-D-glucosamine + diphosphate</text>
        <dbReference type="Rhea" id="RHEA:13509"/>
        <dbReference type="ChEBI" id="CHEBI:15378"/>
        <dbReference type="ChEBI" id="CHEBI:33019"/>
        <dbReference type="ChEBI" id="CHEBI:46398"/>
        <dbReference type="ChEBI" id="CHEBI:57705"/>
        <dbReference type="ChEBI" id="CHEBI:57776"/>
        <dbReference type="EC" id="2.7.7.23"/>
    </reaction>
</comment>
<comment type="cofactor">
    <cofactor evidence="1">
        <name>Mg(2+)</name>
        <dbReference type="ChEBI" id="CHEBI:18420"/>
    </cofactor>
    <text evidence="1">Binds 1 Mg(2+) ion per subunit.</text>
</comment>
<comment type="pathway">
    <text evidence="1">Nucleotide-sugar biosynthesis; UDP-N-acetyl-alpha-D-glucosamine biosynthesis; N-acetyl-alpha-D-glucosamine 1-phosphate from alpha-D-glucosamine 6-phosphate (route II): step 2/2.</text>
</comment>
<comment type="pathway">
    <text evidence="1">Nucleotide-sugar biosynthesis; UDP-N-acetyl-alpha-D-glucosamine biosynthesis; UDP-N-acetyl-alpha-D-glucosamine from N-acetyl-alpha-D-glucosamine 1-phosphate: step 1/1.</text>
</comment>
<comment type="pathway">
    <text evidence="1">Bacterial outer membrane biogenesis; LPS lipid A biosynthesis.</text>
</comment>
<comment type="subunit">
    <text evidence="1">Homotrimer.</text>
</comment>
<comment type="subcellular location">
    <subcellularLocation>
        <location evidence="1">Cytoplasm</location>
    </subcellularLocation>
</comment>
<comment type="similarity">
    <text evidence="1">In the N-terminal section; belongs to the N-acetylglucosamine-1-phosphate uridyltransferase family.</text>
</comment>
<comment type="similarity">
    <text evidence="1">In the C-terminal section; belongs to the transferase hexapeptide repeat family.</text>
</comment>
<accession>A7FPD8</accession>
<evidence type="ECO:0000255" key="1">
    <source>
        <dbReference type="HAMAP-Rule" id="MF_01631"/>
    </source>
</evidence>
<reference key="1">
    <citation type="journal article" date="2007" name="PLoS Genet.">
        <title>The complete genome sequence of Yersinia pseudotuberculosis IP31758, the causative agent of Far East scarlet-like fever.</title>
        <authorList>
            <person name="Eppinger M."/>
            <person name="Rosovitz M.J."/>
            <person name="Fricke W.F."/>
            <person name="Rasko D.A."/>
            <person name="Kokorina G."/>
            <person name="Fayolle C."/>
            <person name="Lindler L.E."/>
            <person name="Carniel E."/>
            <person name="Ravel J."/>
        </authorList>
    </citation>
    <scope>NUCLEOTIDE SEQUENCE [LARGE SCALE GENOMIC DNA]</scope>
    <source>
        <strain>IP 31758</strain>
    </source>
</reference>